<dbReference type="EMBL" id="CU928162">
    <property type="protein sequence ID" value="CAR09978.1"/>
    <property type="molecule type" value="Genomic_DNA"/>
</dbReference>
<dbReference type="RefSeq" id="WP_000579833.1">
    <property type="nucleotide sequence ID" value="NC_011745.1"/>
</dbReference>
<dbReference type="SMR" id="B7N0W0"/>
<dbReference type="GeneID" id="86948184"/>
<dbReference type="KEGG" id="ecq:ECED1_3983"/>
<dbReference type="HOGENOM" id="CLU_044142_4_1_6"/>
<dbReference type="Proteomes" id="UP000000748">
    <property type="component" value="Chromosome"/>
</dbReference>
<dbReference type="GO" id="GO:0022625">
    <property type="term" value="C:cytosolic large ribosomal subunit"/>
    <property type="evidence" value="ECO:0007669"/>
    <property type="project" value="TreeGrafter"/>
</dbReference>
<dbReference type="GO" id="GO:0019843">
    <property type="term" value="F:rRNA binding"/>
    <property type="evidence" value="ECO:0007669"/>
    <property type="project" value="UniProtKB-UniRule"/>
</dbReference>
<dbReference type="GO" id="GO:0003735">
    <property type="term" value="F:structural constituent of ribosome"/>
    <property type="evidence" value="ECO:0007669"/>
    <property type="project" value="InterPro"/>
</dbReference>
<dbReference type="GO" id="GO:0006412">
    <property type="term" value="P:translation"/>
    <property type="evidence" value="ECO:0007669"/>
    <property type="project" value="UniProtKB-UniRule"/>
</dbReference>
<dbReference type="FunFam" id="2.40.30.10:FF:000004">
    <property type="entry name" value="50S ribosomal protein L3"/>
    <property type="match status" value="1"/>
</dbReference>
<dbReference type="FunFam" id="3.30.160.810:FF:000001">
    <property type="entry name" value="50S ribosomal protein L3"/>
    <property type="match status" value="1"/>
</dbReference>
<dbReference type="Gene3D" id="3.30.160.810">
    <property type="match status" value="1"/>
</dbReference>
<dbReference type="Gene3D" id="2.40.30.10">
    <property type="entry name" value="Translation factors"/>
    <property type="match status" value="1"/>
</dbReference>
<dbReference type="HAMAP" id="MF_01325_B">
    <property type="entry name" value="Ribosomal_uL3_B"/>
    <property type="match status" value="1"/>
</dbReference>
<dbReference type="InterPro" id="IPR000597">
    <property type="entry name" value="Ribosomal_uL3"/>
</dbReference>
<dbReference type="InterPro" id="IPR019927">
    <property type="entry name" value="Ribosomal_uL3_bac/org-type"/>
</dbReference>
<dbReference type="InterPro" id="IPR019926">
    <property type="entry name" value="Ribosomal_uL3_CS"/>
</dbReference>
<dbReference type="InterPro" id="IPR009000">
    <property type="entry name" value="Transl_B-barrel_sf"/>
</dbReference>
<dbReference type="NCBIfam" id="TIGR03625">
    <property type="entry name" value="L3_bact"/>
    <property type="match status" value="1"/>
</dbReference>
<dbReference type="PANTHER" id="PTHR11229">
    <property type="entry name" value="50S RIBOSOMAL PROTEIN L3"/>
    <property type="match status" value="1"/>
</dbReference>
<dbReference type="PANTHER" id="PTHR11229:SF16">
    <property type="entry name" value="LARGE RIBOSOMAL SUBUNIT PROTEIN UL3C"/>
    <property type="match status" value="1"/>
</dbReference>
<dbReference type="Pfam" id="PF00297">
    <property type="entry name" value="Ribosomal_L3"/>
    <property type="match status" value="1"/>
</dbReference>
<dbReference type="SUPFAM" id="SSF50447">
    <property type="entry name" value="Translation proteins"/>
    <property type="match status" value="1"/>
</dbReference>
<dbReference type="PROSITE" id="PS00474">
    <property type="entry name" value="RIBOSOMAL_L3"/>
    <property type="match status" value="1"/>
</dbReference>
<proteinExistence type="inferred from homology"/>
<comment type="function">
    <text evidence="1">One of the primary rRNA binding proteins, it binds directly near the 3'-end of the 23S rRNA, where it nucleates assembly of the 50S subunit.</text>
</comment>
<comment type="subunit">
    <text evidence="1">Part of the 50S ribosomal subunit. Forms a cluster with proteins L14 and L19.</text>
</comment>
<comment type="PTM">
    <text evidence="1">Methylated by PrmB.</text>
</comment>
<comment type="similarity">
    <text evidence="1">Belongs to the universal ribosomal protein uL3 family.</text>
</comment>
<sequence>MIGLVGKKVGMTRIFTEDGVSIPVTVIEVEANRVTQVKDLANDGYRAIQVTTGAKKANRVTKPEAGHFAKAGVEAGRGLWEFRLAEGEEFTVGQSISVELFADVKKVDVTGTSKGKGFAGTVKRWNFRTQDATHGNSLSHRVPGSIGQNQTPGKVFKGKKMAGQMGNERVTVQSLDVVRVDAERNLLLVKGAVPGATGSDLIVKPAVKA</sequence>
<reference key="1">
    <citation type="journal article" date="2009" name="PLoS Genet.">
        <title>Organised genome dynamics in the Escherichia coli species results in highly diverse adaptive paths.</title>
        <authorList>
            <person name="Touchon M."/>
            <person name="Hoede C."/>
            <person name="Tenaillon O."/>
            <person name="Barbe V."/>
            <person name="Baeriswyl S."/>
            <person name="Bidet P."/>
            <person name="Bingen E."/>
            <person name="Bonacorsi S."/>
            <person name="Bouchier C."/>
            <person name="Bouvet O."/>
            <person name="Calteau A."/>
            <person name="Chiapello H."/>
            <person name="Clermont O."/>
            <person name="Cruveiller S."/>
            <person name="Danchin A."/>
            <person name="Diard M."/>
            <person name="Dossat C."/>
            <person name="Karoui M.E."/>
            <person name="Frapy E."/>
            <person name="Garry L."/>
            <person name="Ghigo J.M."/>
            <person name="Gilles A.M."/>
            <person name="Johnson J."/>
            <person name="Le Bouguenec C."/>
            <person name="Lescat M."/>
            <person name="Mangenot S."/>
            <person name="Martinez-Jehanne V."/>
            <person name="Matic I."/>
            <person name="Nassif X."/>
            <person name="Oztas S."/>
            <person name="Petit M.A."/>
            <person name="Pichon C."/>
            <person name="Rouy Z."/>
            <person name="Ruf C.S."/>
            <person name="Schneider D."/>
            <person name="Tourret J."/>
            <person name="Vacherie B."/>
            <person name="Vallenet D."/>
            <person name="Medigue C."/>
            <person name="Rocha E.P.C."/>
            <person name="Denamur E."/>
        </authorList>
    </citation>
    <scope>NUCLEOTIDE SEQUENCE [LARGE SCALE GENOMIC DNA]</scope>
    <source>
        <strain>ED1a</strain>
    </source>
</reference>
<keyword id="KW-0488">Methylation</keyword>
<keyword id="KW-0687">Ribonucleoprotein</keyword>
<keyword id="KW-0689">Ribosomal protein</keyword>
<keyword id="KW-0694">RNA-binding</keyword>
<keyword id="KW-0699">rRNA-binding</keyword>
<organism>
    <name type="scientific">Escherichia coli O81 (strain ED1a)</name>
    <dbReference type="NCBI Taxonomy" id="585397"/>
    <lineage>
        <taxon>Bacteria</taxon>
        <taxon>Pseudomonadati</taxon>
        <taxon>Pseudomonadota</taxon>
        <taxon>Gammaproteobacteria</taxon>
        <taxon>Enterobacterales</taxon>
        <taxon>Enterobacteriaceae</taxon>
        <taxon>Escherichia</taxon>
    </lineage>
</organism>
<accession>B7N0W0</accession>
<evidence type="ECO:0000255" key="1">
    <source>
        <dbReference type="HAMAP-Rule" id="MF_01325"/>
    </source>
</evidence>
<evidence type="ECO:0000305" key="2"/>
<gene>
    <name evidence="1" type="primary">rplC</name>
    <name type="ordered locus">ECED1_3983</name>
</gene>
<protein>
    <recommendedName>
        <fullName evidence="1">Large ribosomal subunit protein uL3</fullName>
    </recommendedName>
    <alternativeName>
        <fullName evidence="2">50S ribosomal protein L3</fullName>
    </alternativeName>
</protein>
<feature type="chain" id="PRO_1000165886" description="Large ribosomal subunit protein uL3">
    <location>
        <begin position="1"/>
        <end position="209"/>
    </location>
</feature>
<feature type="modified residue" description="N5-methylglutamine" evidence="1">
    <location>
        <position position="150"/>
    </location>
</feature>
<name>RL3_ECO81</name>